<sequence length="346" mass="37430">MVSEAPPFWWTKADWRAYALWPFSWLYGRIAGMRMDRARRATSAVPLICIGNFTVGGAGKTPTAIAIARAAKARGLKPAFLSRGYGGSLDVTTLVDPEHHRARDVGDEPLLLAREALTVICRRRVDGARKLAAEGADIIIMDDGFQSARLVFDFALIVVDSGRGIGNGHLVPSGPVRAPIGNQLRHATALLKLGHGSAADPVVRRASRAGKPVYVAETVRIDEGSLVGVKVLAWAGIADTEKFFKTVRETGAIIEETRSFPDHHHFSEDEIADLIDRATSRGYTLVTTAKDIVRLEPGHGRAGELAAKSRVIEIEVRFDDPAAPGKIIDAALASARARRLREHKSG</sequence>
<keyword id="KW-0067">ATP-binding</keyword>
<keyword id="KW-0418">Kinase</keyword>
<keyword id="KW-0441">Lipid A biosynthesis</keyword>
<keyword id="KW-0444">Lipid biosynthesis</keyword>
<keyword id="KW-0443">Lipid metabolism</keyword>
<keyword id="KW-0547">Nucleotide-binding</keyword>
<keyword id="KW-0808">Transferase</keyword>
<evidence type="ECO:0000255" key="1">
    <source>
        <dbReference type="HAMAP-Rule" id="MF_00409"/>
    </source>
</evidence>
<gene>
    <name evidence="1" type="primary">lpxK</name>
    <name type="ordered locus">Smed_0426</name>
</gene>
<reference key="1">
    <citation type="submission" date="2007-06" db="EMBL/GenBank/DDBJ databases">
        <title>Complete sequence of Sinorhizobium medicae WSM419 chromosome.</title>
        <authorList>
            <consortium name="US DOE Joint Genome Institute"/>
            <person name="Copeland A."/>
            <person name="Lucas S."/>
            <person name="Lapidus A."/>
            <person name="Barry K."/>
            <person name="Glavina del Rio T."/>
            <person name="Dalin E."/>
            <person name="Tice H."/>
            <person name="Pitluck S."/>
            <person name="Chain P."/>
            <person name="Malfatti S."/>
            <person name="Shin M."/>
            <person name="Vergez L."/>
            <person name="Schmutz J."/>
            <person name="Larimer F."/>
            <person name="Land M."/>
            <person name="Hauser L."/>
            <person name="Kyrpides N."/>
            <person name="Mikhailova N."/>
            <person name="Reeve W.G."/>
            <person name="Richardson P."/>
        </authorList>
    </citation>
    <scope>NUCLEOTIDE SEQUENCE [LARGE SCALE GENOMIC DNA]</scope>
    <source>
        <strain>WSM419</strain>
    </source>
</reference>
<name>LPXK_SINMW</name>
<organism>
    <name type="scientific">Sinorhizobium medicae (strain WSM419)</name>
    <name type="common">Ensifer medicae</name>
    <dbReference type="NCBI Taxonomy" id="366394"/>
    <lineage>
        <taxon>Bacteria</taxon>
        <taxon>Pseudomonadati</taxon>
        <taxon>Pseudomonadota</taxon>
        <taxon>Alphaproteobacteria</taxon>
        <taxon>Hyphomicrobiales</taxon>
        <taxon>Rhizobiaceae</taxon>
        <taxon>Sinorhizobium/Ensifer group</taxon>
        <taxon>Sinorhizobium</taxon>
    </lineage>
</organism>
<proteinExistence type="inferred from homology"/>
<protein>
    <recommendedName>
        <fullName evidence="1">Tetraacyldisaccharide 4'-kinase</fullName>
        <ecNumber evidence="1">2.7.1.130</ecNumber>
    </recommendedName>
    <alternativeName>
        <fullName evidence="1">Lipid A 4'-kinase</fullName>
    </alternativeName>
</protein>
<dbReference type="EC" id="2.7.1.130" evidence="1"/>
<dbReference type="EMBL" id="CP000738">
    <property type="protein sequence ID" value="ABR59283.1"/>
    <property type="molecule type" value="Genomic_DNA"/>
</dbReference>
<dbReference type="RefSeq" id="WP_011974630.1">
    <property type="nucleotide sequence ID" value="NC_009636.1"/>
</dbReference>
<dbReference type="RefSeq" id="YP_001326118.1">
    <property type="nucleotide sequence ID" value="NC_009636.1"/>
</dbReference>
<dbReference type="SMR" id="A6U6K3"/>
<dbReference type="STRING" id="366394.Smed_0426"/>
<dbReference type="GeneID" id="61609700"/>
<dbReference type="KEGG" id="smd:Smed_0426"/>
<dbReference type="PATRIC" id="fig|366394.8.peg.3508"/>
<dbReference type="eggNOG" id="COG1663">
    <property type="taxonomic scope" value="Bacteria"/>
</dbReference>
<dbReference type="HOGENOM" id="CLU_038816_0_0_5"/>
<dbReference type="OrthoDB" id="9766423at2"/>
<dbReference type="UniPathway" id="UPA00359">
    <property type="reaction ID" value="UER00482"/>
</dbReference>
<dbReference type="Proteomes" id="UP000001108">
    <property type="component" value="Chromosome"/>
</dbReference>
<dbReference type="GO" id="GO:0005886">
    <property type="term" value="C:plasma membrane"/>
    <property type="evidence" value="ECO:0007669"/>
    <property type="project" value="TreeGrafter"/>
</dbReference>
<dbReference type="GO" id="GO:0005524">
    <property type="term" value="F:ATP binding"/>
    <property type="evidence" value="ECO:0007669"/>
    <property type="project" value="UniProtKB-UniRule"/>
</dbReference>
<dbReference type="GO" id="GO:0009029">
    <property type="term" value="F:tetraacyldisaccharide 4'-kinase activity"/>
    <property type="evidence" value="ECO:0007669"/>
    <property type="project" value="UniProtKB-UniRule"/>
</dbReference>
<dbReference type="GO" id="GO:0009245">
    <property type="term" value="P:lipid A biosynthetic process"/>
    <property type="evidence" value="ECO:0007669"/>
    <property type="project" value="UniProtKB-UniRule"/>
</dbReference>
<dbReference type="GO" id="GO:0009244">
    <property type="term" value="P:lipopolysaccharide core region biosynthetic process"/>
    <property type="evidence" value="ECO:0007669"/>
    <property type="project" value="TreeGrafter"/>
</dbReference>
<dbReference type="HAMAP" id="MF_00409">
    <property type="entry name" value="LpxK"/>
    <property type="match status" value="1"/>
</dbReference>
<dbReference type="InterPro" id="IPR003758">
    <property type="entry name" value="LpxK"/>
</dbReference>
<dbReference type="InterPro" id="IPR027417">
    <property type="entry name" value="P-loop_NTPase"/>
</dbReference>
<dbReference type="NCBIfam" id="TIGR00682">
    <property type="entry name" value="lpxK"/>
    <property type="match status" value="1"/>
</dbReference>
<dbReference type="PANTHER" id="PTHR42724">
    <property type="entry name" value="TETRAACYLDISACCHARIDE 4'-KINASE"/>
    <property type="match status" value="1"/>
</dbReference>
<dbReference type="PANTHER" id="PTHR42724:SF1">
    <property type="entry name" value="TETRAACYLDISACCHARIDE 4'-KINASE, MITOCHONDRIAL-RELATED"/>
    <property type="match status" value="1"/>
</dbReference>
<dbReference type="Pfam" id="PF02606">
    <property type="entry name" value="LpxK"/>
    <property type="match status" value="1"/>
</dbReference>
<dbReference type="SUPFAM" id="SSF52540">
    <property type="entry name" value="P-loop containing nucleoside triphosphate hydrolases"/>
    <property type="match status" value="1"/>
</dbReference>
<accession>A6U6K3</accession>
<comment type="function">
    <text evidence="1">Transfers the gamma-phosphate of ATP to the 4'-position of a tetraacyldisaccharide 1-phosphate intermediate (termed DS-1-P) to form tetraacyldisaccharide 1,4'-bis-phosphate (lipid IVA).</text>
</comment>
<comment type="catalytic activity">
    <reaction evidence="1">
        <text>a lipid A disaccharide + ATP = a lipid IVA + ADP + H(+)</text>
        <dbReference type="Rhea" id="RHEA:67840"/>
        <dbReference type="ChEBI" id="CHEBI:15378"/>
        <dbReference type="ChEBI" id="CHEBI:30616"/>
        <dbReference type="ChEBI" id="CHEBI:176343"/>
        <dbReference type="ChEBI" id="CHEBI:176425"/>
        <dbReference type="ChEBI" id="CHEBI:456216"/>
        <dbReference type="EC" id="2.7.1.130"/>
    </reaction>
</comment>
<comment type="pathway">
    <text evidence="1">Glycolipid biosynthesis; lipid IV(A) biosynthesis; lipid IV(A) from (3R)-3-hydroxytetradecanoyl-[acyl-carrier-protein] and UDP-N-acetyl-alpha-D-glucosamine: step 6/6.</text>
</comment>
<comment type="similarity">
    <text evidence="1">Belongs to the LpxK family.</text>
</comment>
<feature type="chain" id="PRO_1000049906" description="Tetraacyldisaccharide 4'-kinase">
    <location>
        <begin position="1"/>
        <end position="346"/>
    </location>
</feature>
<feature type="binding site" evidence="1">
    <location>
        <begin position="54"/>
        <end position="61"/>
    </location>
    <ligand>
        <name>ATP</name>
        <dbReference type="ChEBI" id="CHEBI:30616"/>
    </ligand>
</feature>